<evidence type="ECO:0000255" key="1"/>
<evidence type="ECO:0000305" key="2"/>
<proteinExistence type="evidence at transcript level"/>
<accession>Q3EC77</accession>
<accession>Q8H0Z7</accession>
<accession>Q94BV9</accession>
<accession>Q9ZQ84</accession>
<comment type="subcellular location">
    <subcellularLocation>
        <location evidence="2">Endoplasmic reticulum membrane</location>
        <topology evidence="2">Single-pass type II membrane protein</topology>
    </subcellularLocation>
</comment>
<comment type="alternative products">
    <event type="alternative splicing"/>
    <isoform>
        <id>Q3EC77-1</id>
        <name>1</name>
        <sequence type="displayed"/>
    </isoform>
    <isoform>
        <id>Q3EC77-2</id>
        <name>2</name>
        <sequence type="described" ref="VSP_038902"/>
    </isoform>
</comment>
<comment type="similarity">
    <text evidence="2">Belongs to the methyltransferase superfamily.</text>
</comment>
<comment type="sequence caution" evidence="2">
    <conflict type="erroneous gene model prediction">
        <sequence resource="EMBL-CDS" id="AAD17428"/>
    </conflict>
</comment>
<comment type="sequence caution" evidence="2">
    <conflict type="miscellaneous discrepancy">
        <sequence resource="EMBL-CDS" id="AAK63953"/>
    </conflict>
    <text>Intron retention.</text>
</comment>
<comment type="sequence caution" evidence="2">
    <conflict type="miscellaneous discrepancy">
        <sequence resource="EMBL-CDS" id="AAN46794"/>
    </conflict>
    <text>Intron retention.</text>
</comment>
<organism>
    <name type="scientific">Arabidopsis thaliana</name>
    <name type="common">Mouse-ear cress</name>
    <dbReference type="NCBI Taxonomy" id="3702"/>
    <lineage>
        <taxon>Eukaryota</taxon>
        <taxon>Viridiplantae</taxon>
        <taxon>Streptophyta</taxon>
        <taxon>Embryophyta</taxon>
        <taxon>Tracheophyta</taxon>
        <taxon>Spermatophyta</taxon>
        <taxon>Magnoliopsida</taxon>
        <taxon>eudicotyledons</taxon>
        <taxon>Gunneridae</taxon>
        <taxon>Pentapetalae</taxon>
        <taxon>rosids</taxon>
        <taxon>malvids</taxon>
        <taxon>Brassicales</taxon>
        <taxon>Brassicaceae</taxon>
        <taxon>Camelineae</taxon>
        <taxon>Arabidopsis</taxon>
    </lineage>
</organism>
<reference key="1">
    <citation type="journal article" date="1999" name="Nature">
        <title>Sequence and analysis of chromosome 2 of the plant Arabidopsis thaliana.</title>
        <authorList>
            <person name="Lin X."/>
            <person name="Kaul S."/>
            <person name="Rounsley S.D."/>
            <person name="Shea T.P."/>
            <person name="Benito M.-I."/>
            <person name="Town C.D."/>
            <person name="Fujii C.Y."/>
            <person name="Mason T.M."/>
            <person name="Bowman C.L."/>
            <person name="Barnstead M.E."/>
            <person name="Feldblyum T.V."/>
            <person name="Buell C.R."/>
            <person name="Ketchum K.A."/>
            <person name="Lee J.J."/>
            <person name="Ronning C.M."/>
            <person name="Koo H.L."/>
            <person name="Moffat K.S."/>
            <person name="Cronin L.A."/>
            <person name="Shen M."/>
            <person name="Pai G."/>
            <person name="Van Aken S."/>
            <person name="Umayam L."/>
            <person name="Tallon L.J."/>
            <person name="Gill J.E."/>
            <person name="Adams M.D."/>
            <person name="Carrera A.J."/>
            <person name="Creasy T.H."/>
            <person name="Goodman H.M."/>
            <person name="Somerville C.R."/>
            <person name="Copenhaver G.P."/>
            <person name="Preuss D."/>
            <person name="Nierman W.C."/>
            <person name="White O."/>
            <person name="Eisen J.A."/>
            <person name="Salzberg S.L."/>
            <person name="Fraser C.M."/>
            <person name="Venter J.C."/>
        </authorList>
    </citation>
    <scope>NUCLEOTIDE SEQUENCE [LARGE SCALE GENOMIC DNA]</scope>
    <source>
        <strain>cv. Columbia</strain>
    </source>
</reference>
<reference key="2">
    <citation type="journal article" date="2017" name="Plant J.">
        <title>Araport11: a complete reannotation of the Arabidopsis thaliana reference genome.</title>
        <authorList>
            <person name="Cheng C.Y."/>
            <person name="Krishnakumar V."/>
            <person name="Chan A.P."/>
            <person name="Thibaud-Nissen F."/>
            <person name="Schobel S."/>
            <person name="Town C.D."/>
        </authorList>
    </citation>
    <scope>GENOME REANNOTATION</scope>
    <source>
        <strain>cv. Columbia</strain>
    </source>
</reference>
<reference key="3">
    <citation type="journal article" date="2003" name="Science">
        <title>Empirical analysis of transcriptional activity in the Arabidopsis genome.</title>
        <authorList>
            <person name="Yamada K."/>
            <person name="Lim J."/>
            <person name="Dale J.M."/>
            <person name="Chen H."/>
            <person name="Shinn P."/>
            <person name="Palm C.J."/>
            <person name="Southwick A.M."/>
            <person name="Wu H.C."/>
            <person name="Kim C.J."/>
            <person name="Nguyen M."/>
            <person name="Pham P.K."/>
            <person name="Cheuk R.F."/>
            <person name="Karlin-Newmann G."/>
            <person name="Liu S.X."/>
            <person name="Lam B."/>
            <person name="Sakano H."/>
            <person name="Wu T."/>
            <person name="Yu G."/>
            <person name="Miranda M."/>
            <person name="Quach H.L."/>
            <person name="Tripp M."/>
            <person name="Chang C.H."/>
            <person name="Lee J.M."/>
            <person name="Toriumi M.J."/>
            <person name="Chan M.M."/>
            <person name="Tang C.C."/>
            <person name="Onodera C.S."/>
            <person name="Deng J.M."/>
            <person name="Akiyama K."/>
            <person name="Ansari Y."/>
            <person name="Arakawa T."/>
            <person name="Banh J."/>
            <person name="Banno F."/>
            <person name="Bowser L."/>
            <person name="Brooks S.Y."/>
            <person name="Carninci P."/>
            <person name="Chao Q."/>
            <person name="Choy N."/>
            <person name="Enju A."/>
            <person name="Goldsmith A.D."/>
            <person name="Gurjal M."/>
            <person name="Hansen N.F."/>
            <person name="Hayashizaki Y."/>
            <person name="Johnson-Hopson C."/>
            <person name="Hsuan V.W."/>
            <person name="Iida K."/>
            <person name="Karnes M."/>
            <person name="Khan S."/>
            <person name="Koesema E."/>
            <person name="Ishida J."/>
            <person name="Jiang P.X."/>
            <person name="Jones T."/>
            <person name="Kawai J."/>
            <person name="Kamiya A."/>
            <person name="Meyers C."/>
            <person name="Nakajima M."/>
            <person name="Narusaka M."/>
            <person name="Seki M."/>
            <person name="Sakurai T."/>
            <person name="Satou M."/>
            <person name="Tamse R."/>
            <person name="Vaysberg M."/>
            <person name="Wallender E.K."/>
            <person name="Wong C."/>
            <person name="Yamamura Y."/>
            <person name="Yuan S."/>
            <person name="Shinozaki K."/>
            <person name="Davis R.W."/>
            <person name="Theologis A."/>
            <person name="Ecker J.R."/>
        </authorList>
    </citation>
    <scope>NUCLEOTIDE SEQUENCE [LARGE SCALE MRNA]</scope>
    <source>
        <strain>cv. Columbia</strain>
    </source>
</reference>
<reference key="4">
    <citation type="journal article" date="2007" name="Plant J.">
        <title>The TUMOROUS SHOOT DEVELOPMENT2 gene of Arabidopsis encoding a putative methyltransferase is required for cell adhesion and co-ordinated plant development.</title>
        <authorList>
            <person name="Krupkova E."/>
            <person name="Immerzeel P."/>
            <person name="Pauly M."/>
            <person name="Schmulling T."/>
        </authorList>
    </citation>
    <scope>GENE FAMILY</scope>
</reference>
<feature type="chain" id="PRO_0000393245" description="Probable methyltransferase PMT5">
    <location>
        <begin position="1"/>
        <end position="606"/>
    </location>
</feature>
<feature type="topological domain" description="Cytoplasmic" evidence="1">
    <location>
        <begin position="1"/>
        <end position="20"/>
    </location>
</feature>
<feature type="transmembrane region" description="Helical; Signal-anchor for type II membrane protein" evidence="1">
    <location>
        <begin position="21"/>
        <end position="41"/>
    </location>
</feature>
<feature type="topological domain" description="Lumenal" evidence="1">
    <location>
        <begin position="42"/>
        <end position="606"/>
    </location>
</feature>
<feature type="glycosylation site" description="N-linked (GlcNAc...) asparagine" evidence="1">
    <location>
        <position position="101"/>
    </location>
</feature>
<feature type="glycosylation site" description="N-linked (GlcNAc...) asparagine" evidence="1">
    <location>
        <position position="409"/>
    </location>
</feature>
<feature type="splice variant" id="VSP_038902" description="In isoform 2." evidence="2">
    <original>KRWISIQNRSAVAGTTSAGLEIHGK</original>
    <variation>LKPEEFFEDTQIWR</variation>
    <location>
        <begin position="402"/>
        <end position="426"/>
    </location>
</feature>
<dbReference type="EC" id="2.1.1.-"/>
<dbReference type="EMBL" id="AC006284">
    <property type="protein sequence ID" value="AAD17428.2"/>
    <property type="status" value="ALT_SEQ"/>
    <property type="molecule type" value="Genomic_DNA"/>
</dbReference>
<dbReference type="EMBL" id="CP002685">
    <property type="protein sequence ID" value="AEC05705.1"/>
    <property type="molecule type" value="Genomic_DNA"/>
</dbReference>
<dbReference type="EMBL" id="CP002685">
    <property type="protein sequence ID" value="AEC05706.1"/>
    <property type="molecule type" value="Genomic_DNA"/>
</dbReference>
<dbReference type="EMBL" id="AY039849">
    <property type="protein sequence ID" value="AAK63953.1"/>
    <property type="status" value="ALT_SEQ"/>
    <property type="molecule type" value="mRNA"/>
</dbReference>
<dbReference type="EMBL" id="BT001040">
    <property type="protein sequence ID" value="AAN46794.1"/>
    <property type="status" value="ALT_SEQ"/>
    <property type="molecule type" value="mRNA"/>
</dbReference>
<dbReference type="PIR" id="A84449">
    <property type="entry name" value="A84449"/>
</dbReference>
<dbReference type="RefSeq" id="NP_027543.2">
    <molecule id="Q3EC77-1"/>
    <property type="nucleotide sequence ID" value="NM_126399.3"/>
</dbReference>
<dbReference type="RefSeq" id="NP_973410.1">
    <molecule id="Q3EC77-2"/>
    <property type="nucleotide sequence ID" value="NM_201681.2"/>
</dbReference>
<dbReference type="SMR" id="Q3EC77"/>
<dbReference type="FunCoup" id="Q3EC77">
    <property type="interactions" value="293"/>
</dbReference>
<dbReference type="STRING" id="3702.Q3EC77"/>
<dbReference type="GlyGen" id="Q3EC77">
    <property type="glycosylation" value="2 sites"/>
</dbReference>
<dbReference type="iPTMnet" id="Q3EC77"/>
<dbReference type="PaxDb" id="3702-AT2G03480.1"/>
<dbReference type="ProteomicsDB" id="234984">
    <molecule id="Q3EC77-1"/>
</dbReference>
<dbReference type="EnsemblPlants" id="AT2G03480.1">
    <molecule id="Q3EC77-1"/>
    <property type="protein sequence ID" value="AT2G03480.1"/>
    <property type="gene ID" value="AT2G03480"/>
</dbReference>
<dbReference type="EnsemblPlants" id="AT2G03480.2">
    <molecule id="Q3EC77-2"/>
    <property type="protein sequence ID" value="AT2G03480.2"/>
    <property type="gene ID" value="AT2G03480"/>
</dbReference>
<dbReference type="GeneID" id="814877"/>
<dbReference type="Gramene" id="AT2G03480.1">
    <molecule id="Q3EC77-1"/>
    <property type="protein sequence ID" value="AT2G03480.1"/>
    <property type="gene ID" value="AT2G03480"/>
</dbReference>
<dbReference type="Gramene" id="AT2G03480.2">
    <molecule id="Q3EC77-2"/>
    <property type="protein sequence ID" value="AT2G03480.2"/>
    <property type="gene ID" value="AT2G03480"/>
</dbReference>
<dbReference type="KEGG" id="ath:AT2G03480"/>
<dbReference type="Araport" id="AT2G03480"/>
<dbReference type="TAIR" id="AT2G03480">
    <property type="gene designation" value="QUL2"/>
</dbReference>
<dbReference type="eggNOG" id="ENOG502QT31">
    <property type="taxonomic scope" value="Eukaryota"/>
</dbReference>
<dbReference type="InParanoid" id="Q3EC77"/>
<dbReference type="OMA" id="TWVPENY"/>
<dbReference type="PhylomeDB" id="Q3EC77"/>
<dbReference type="PRO" id="PR:Q3EC77"/>
<dbReference type="Proteomes" id="UP000006548">
    <property type="component" value="Chromosome 2"/>
</dbReference>
<dbReference type="ExpressionAtlas" id="Q3EC77">
    <property type="expression patterns" value="baseline and differential"/>
</dbReference>
<dbReference type="GO" id="GO:0005789">
    <property type="term" value="C:endoplasmic reticulum membrane"/>
    <property type="evidence" value="ECO:0007669"/>
    <property type="project" value="UniProtKB-SubCell"/>
</dbReference>
<dbReference type="GO" id="GO:0005794">
    <property type="term" value="C:Golgi apparatus"/>
    <property type="evidence" value="ECO:0007005"/>
    <property type="project" value="TAIR"/>
</dbReference>
<dbReference type="GO" id="GO:0000138">
    <property type="term" value="C:Golgi trans cisterna"/>
    <property type="evidence" value="ECO:0007005"/>
    <property type="project" value="TAIR"/>
</dbReference>
<dbReference type="GO" id="GO:0008168">
    <property type="term" value="F:methyltransferase activity"/>
    <property type="evidence" value="ECO:0007669"/>
    <property type="project" value="UniProtKB-KW"/>
</dbReference>
<dbReference type="GO" id="GO:0032259">
    <property type="term" value="P:methylation"/>
    <property type="evidence" value="ECO:0007669"/>
    <property type="project" value="UniProtKB-KW"/>
</dbReference>
<dbReference type="CDD" id="cd02440">
    <property type="entry name" value="AdoMet_MTases"/>
    <property type="match status" value="1"/>
</dbReference>
<dbReference type="FunFam" id="3.40.50.150:FF:000119">
    <property type="entry name" value="probable pectin methyltransferase QUA2"/>
    <property type="match status" value="1"/>
</dbReference>
<dbReference type="Gene3D" id="3.40.50.150">
    <property type="entry name" value="Vaccinia Virus protein VP39"/>
    <property type="match status" value="1"/>
</dbReference>
<dbReference type="InterPro" id="IPR004159">
    <property type="entry name" value="Put_SAM_MeTrfase"/>
</dbReference>
<dbReference type="InterPro" id="IPR029063">
    <property type="entry name" value="SAM-dependent_MTases_sf"/>
</dbReference>
<dbReference type="PANTHER" id="PTHR10108:SF1083">
    <property type="entry name" value="METHYLTRANSFERASE PMT4-RELATED"/>
    <property type="match status" value="1"/>
</dbReference>
<dbReference type="PANTHER" id="PTHR10108">
    <property type="entry name" value="SAM-DEPENDENT METHYLTRANSFERASE"/>
    <property type="match status" value="1"/>
</dbReference>
<dbReference type="Pfam" id="PF03141">
    <property type="entry name" value="Methyltransf_29"/>
    <property type="match status" value="2"/>
</dbReference>
<dbReference type="SUPFAM" id="SSF53335">
    <property type="entry name" value="S-adenosyl-L-methionine-dependent methyltransferases"/>
    <property type="match status" value="2"/>
</dbReference>
<gene>
    <name type="ordered locus">At2g03480</name>
    <name type="ORF">T4M8.9</name>
</gene>
<protein>
    <recommendedName>
        <fullName>Probable methyltransferase PMT5</fullName>
        <ecNumber>2.1.1.-</ecNumber>
    </recommendedName>
</protein>
<sequence>MRGSWYKSVSSVFGLRPRIRGLLFFIVGVVALVTILAPLTSNSYDSSSSSTLVPNIYSNYRRIKEQAAVDYLDLRSLSLGASLKEFPFCGKERESYVPCYNITGNLLAGLQEGEELDRHCEFEREKERCVVRPPRDYKIPLRWPLGRDIIWSGNVKITKDQFLSSGTVTTRLMLLEENQITFHSEDGLVFDGVKDYARQIAEMIGLGSDTEFAQAGVRTVLDIGCGFGSFGAHLVSLKLMPICIAEYEATGSQVQLALERGLPAMIGNFFSKQLPYPALSFDMVHCAQCGTTWDIKDAMLLLEVDRVLKPGGYFVLTSPTNKAQGNLPDTKKTSISTRVNELSKKICWSLTAQQDETFLWQKTSDSSCYSSRSQASIPLCKDGDSVPYYHPLVPCISGTTSKRWISIQNRSAVAGTTSAGLEIHGKSALKNYWSLLTPLIFSDHPKRPGDEDPLPPFNMIRNVMDMHARFGNLNAALLDEGKSAWVMNVVPVNARNTLPIILDRGFAGVLHDWCEPFPTYPRTYDMLHANELLTHLSSERCSLMDLFLEMDRILRPEGWVVLSDKVGVIEMARALAARVRWEARVIDLQDGSDQRLLVCQKPFIKK</sequence>
<name>PMT5_ARATH</name>
<keyword id="KW-0025">Alternative splicing</keyword>
<keyword id="KW-0256">Endoplasmic reticulum</keyword>
<keyword id="KW-0325">Glycoprotein</keyword>
<keyword id="KW-0472">Membrane</keyword>
<keyword id="KW-0489">Methyltransferase</keyword>
<keyword id="KW-1185">Reference proteome</keyword>
<keyword id="KW-0735">Signal-anchor</keyword>
<keyword id="KW-0808">Transferase</keyword>
<keyword id="KW-0812">Transmembrane</keyword>
<keyword id="KW-1133">Transmembrane helix</keyword>